<gene>
    <name evidence="1" type="primary">infA</name>
    <name type="ordered locus">lhv_0334</name>
</gene>
<feature type="chain" id="PRO_0000338847" description="Translation initiation factor IF-1">
    <location>
        <begin position="1"/>
        <end position="73"/>
    </location>
</feature>
<feature type="domain" description="S1-like" evidence="1">
    <location>
        <begin position="1"/>
        <end position="72"/>
    </location>
</feature>
<reference key="1">
    <citation type="journal article" date="2008" name="J. Bacteriol.">
        <title>Genome sequence of Lactobacillus helveticus: an organism distinguished by selective gene loss and IS element expansion.</title>
        <authorList>
            <person name="Callanan M."/>
            <person name="Kaleta P."/>
            <person name="O'Callaghan J."/>
            <person name="O'Sullivan O."/>
            <person name="Jordan K."/>
            <person name="McAuliffe O."/>
            <person name="Sangrador-Vegas A."/>
            <person name="Slattery L."/>
            <person name="Fitzgerald G.F."/>
            <person name="Beresford T."/>
            <person name="Ross R.P."/>
        </authorList>
    </citation>
    <scope>NUCLEOTIDE SEQUENCE [LARGE SCALE GENOMIC DNA]</scope>
    <source>
        <strain>DPC 4571</strain>
    </source>
</reference>
<protein>
    <recommendedName>
        <fullName evidence="1">Translation initiation factor IF-1</fullName>
    </recommendedName>
</protein>
<keyword id="KW-0963">Cytoplasm</keyword>
<keyword id="KW-0396">Initiation factor</keyword>
<keyword id="KW-0648">Protein biosynthesis</keyword>
<keyword id="KW-0694">RNA-binding</keyword>
<keyword id="KW-0699">rRNA-binding</keyword>
<accession>A8YXM7</accession>
<sequence>MAKDDVIEVEGKVVDTLPNAMFKVELENGATILAHVSGKIRMHYIRILPGDRVTVELSPYDLTKGRITYRFIK</sequence>
<comment type="function">
    <text evidence="1">One of the essential components for the initiation of protein synthesis. Stabilizes the binding of IF-2 and IF-3 on the 30S subunit to which N-formylmethionyl-tRNA(fMet) subsequently binds. Helps modulate mRNA selection, yielding the 30S pre-initiation complex (PIC). Upon addition of the 50S ribosomal subunit IF-1, IF-2 and IF-3 are released leaving the mature 70S translation initiation complex.</text>
</comment>
<comment type="subunit">
    <text evidence="1">Component of the 30S ribosomal translation pre-initiation complex which assembles on the 30S ribosome in the order IF-2 and IF-3, IF-1 and N-formylmethionyl-tRNA(fMet); mRNA recruitment can occur at any time during PIC assembly.</text>
</comment>
<comment type="subcellular location">
    <subcellularLocation>
        <location evidence="1">Cytoplasm</location>
    </subcellularLocation>
</comment>
<comment type="similarity">
    <text evidence="1">Belongs to the IF-1 family.</text>
</comment>
<organism>
    <name type="scientific">Lactobacillus helveticus (strain DPC 4571)</name>
    <dbReference type="NCBI Taxonomy" id="405566"/>
    <lineage>
        <taxon>Bacteria</taxon>
        <taxon>Bacillati</taxon>
        <taxon>Bacillota</taxon>
        <taxon>Bacilli</taxon>
        <taxon>Lactobacillales</taxon>
        <taxon>Lactobacillaceae</taxon>
        <taxon>Lactobacillus</taxon>
    </lineage>
</organism>
<name>IF1_LACH4</name>
<dbReference type="EMBL" id="CP000517">
    <property type="protein sequence ID" value="ABX26558.1"/>
    <property type="molecule type" value="Genomic_DNA"/>
</dbReference>
<dbReference type="RefSeq" id="WP_002878178.1">
    <property type="nucleotide sequence ID" value="NC_010080.1"/>
</dbReference>
<dbReference type="SMR" id="A8YXM7"/>
<dbReference type="GeneID" id="93290579"/>
<dbReference type="KEGG" id="lhe:lhv_0334"/>
<dbReference type="eggNOG" id="COG0361">
    <property type="taxonomic scope" value="Bacteria"/>
</dbReference>
<dbReference type="HOGENOM" id="CLU_151267_1_0_9"/>
<dbReference type="Proteomes" id="UP000000790">
    <property type="component" value="Chromosome"/>
</dbReference>
<dbReference type="GO" id="GO:0005829">
    <property type="term" value="C:cytosol"/>
    <property type="evidence" value="ECO:0007669"/>
    <property type="project" value="TreeGrafter"/>
</dbReference>
<dbReference type="GO" id="GO:0043022">
    <property type="term" value="F:ribosome binding"/>
    <property type="evidence" value="ECO:0007669"/>
    <property type="project" value="UniProtKB-UniRule"/>
</dbReference>
<dbReference type="GO" id="GO:0019843">
    <property type="term" value="F:rRNA binding"/>
    <property type="evidence" value="ECO:0007669"/>
    <property type="project" value="UniProtKB-UniRule"/>
</dbReference>
<dbReference type="GO" id="GO:0003743">
    <property type="term" value="F:translation initiation factor activity"/>
    <property type="evidence" value="ECO:0007669"/>
    <property type="project" value="UniProtKB-UniRule"/>
</dbReference>
<dbReference type="CDD" id="cd04451">
    <property type="entry name" value="S1_IF1"/>
    <property type="match status" value="1"/>
</dbReference>
<dbReference type="FunFam" id="2.40.50.140:FF:000002">
    <property type="entry name" value="Translation initiation factor IF-1"/>
    <property type="match status" value="1"/>
</dbReference>
<dbReference type="Gene3D" id="2.40.50.140">
    <property type="entry name" value="Nucleic acid-binding proteins"/>
    <property type="match status" value="1"/>
</dbReference>
<dbReference type="HAMAP" id="MF_00075">
    <property type="entry name" value="IF_1"/>
    <property type="match status" value="1"/>
</dbReference>
<dbReference type="InterPro" id="IPR012340">
    <property type="entry name" value="NA-bd_OB-fold"/>
</dbReference>
<dbReference type="InterPro" id="IPR006196">
    <property type="entry name" value="RNA-binding_domain_S1_IF1"/>
</dbReference>
<dbReference type="InterPro" id="IPR003029">
    <property type="entry name" value="S1_domain"/>
</dbReference>
<dbReference type="InterPro" id="IPR004368">
    <property type="entry name" value="TIF_IF1"/>
</dbReference>
<dbReference type="NCBIfam" id="TIGR00008">
    <property type="entry name" value="infA"/>
    <property type="match status" value="1"/>
</dbReference>
<dbReference type="PANTHER" id="PTHR33370">
    <property type="entry name" value="TRANSLATION INITIATION FACTOR IF-1, CHLOROPLASTIC"/>
    <property type="match status" value="1"/>
</dbReference>
<dbReference type="PANTHER" id="PTHR33370:SF1">
    <property type="entry name" value="TRANSLATION INITIATION FACTOR IF-1, CHLOROPLASTIC"/>
    <property type="match status" value="1"/>
</dbReference>
<dbReference type="Pfam" id="PF01176">
    <property type="entry name" value="eIF-1a"/>
    <property type="match status" value="1"/>
</dbReference>
<dbReference type="SMART" id="SM00316">
    <property type="entry name" value="S1"/>
    <property type="match status" value="1"/>
</dbReference>
<dbReference type="SUPFAM" id="SSF50249">
    <property type="entry name" value="Nucleic acid-binding proteins"/>
    <property type="match status" value="1"/>
</dbReference>
<dbReference type="PROSITE" id="PS50832">
    <property type="entry name" value="S1_IF1_TYPE"/>
    <property type="match status" value="1"/>
</dbReference>
<proteinExistence type="inferred from homology"/>
<evidence type="ECO:0000255" key="1">
    <source>
        <dbReference type="HAMAP-Rule" id="MF_00075"/>
    </source>
</evidence>